<reference key="1">
    <citation type="submission" date="2007-07" db="EMBL/GenBank/DDBJ databases">
        <title>Complete sequence of chromosome of Xanthobacter autotrophicus Py2.</title>
        <authorList>
            <consortium name="US DOE Joint Genome Institute"/>
            <person name="Copeland A."/>
            <person name="Lucas S."/>
            <person name="Lapidus A."/>
            <person name="Barry K."/>
            <person name="Glavina del Rio T."/>
            <person name="Hammon N."/>
            <person name="Israni S."/>
            <person name="Dalin E."/>
            <person name="Tice H."/>
            <person name="Pitluck S."/>
            <person name="Sims D."/>
            <person name="Brettin T."/>
            <person name="Bruce D."/>
            <person name="Detter J.C."/>
            <person name="Han C."/>
            <person name="Tapia R."/>
            <person name="Brainard J."/>
            <person name="Schmutz J."/>
            <person name="Larimer F."/>
            <person name="Land M."/>
            <person name="Hauser L."/>
            <person name="Kyrpides N."/>
            <person name="Kim E."/>
            <person name="Ensigns S.A."/>
            <person name="Richardson P."/>
        </authorList>
    </citation>
    <scope>NUCLEOTIDE SEQUENCE [LARGE SCALE GENOMIC DNA]</scope>
    <source>
        <strain>ATCC BAA-1158 / Py2</strain>
    </source>
</reference>
<gene>
    <name evidence="1" type="primary">rpmD</name>
    <name type="ordered locus">Xaut_4780</name>
</gene>
<feature type="chain" id="PRO_0000347152" description="Large ribosomal subunit protein uL30">
    <location>
        <begin position="1"/>
        <end position="60"/>
    </location>
</feature>
<comment type="subunit">
    <text evidence="1">Part of the 50S ribosomal subunit.</text>
</comment>
<comment type="similarity">
    <text evidence="1">Belongs to the universal ribosomal protein uL30 family.</text>
</comment>
<sequence length="60" mass="6680">MSDKTVTVEQIGSPIRRPFDQEATLVGLGLNKRHRRSTLKDTPAVRGMIAKVAHLVRVVE</sequence>
<name>RL30_XANP2</name>
<evidence type="ECO:0000255" key="1">
    <source>
        <dbReference type="HAMAP-Rule" id="MF_01371"/>
    </source>
</evidence>
<evidence type="ECO:0000305" key="2"/>
<protein>
    <recommendedName>
        <fullName evidence="1">Large ribosomal subunit protein uL30</fullName>
    </recommendedName>
    <alternativeName>
        <fullName evidence="2">50S ribosomal protein L30</fullName>
    </alternativeName>
</protein>
<accession>A7IPQ2</accession>
<keyword id="KW-1185">Reference proteome</keyword>
<keyword id="KW-0687">Ribonucleoprotein</keyword>
<keyword id="KW-0689">Ribosomal protein</keyword>
<proteinExistence type="inferred from homology"/>
<organism>
    <name type="scientific">Xanthobacter autotrophicus (strain ATCC BAA-1158 / Py2)</name>
    <dbReference type="NCBI Taxonomy" id="78245"/>
    <lineage>
        <taxon>Bacteria</taxon>
        <taxon>Pseudomonadati</taxon>
        <taxon>Pseudomonadota</taxon>
        <taxon>Alphaproteobacteria</taxon>
        <taxon>Hyphomicrobiales</taxon>
        <taxon>Xanthobacteraceae</taxon>
        <taxon>Xanthobacter</taxon>
    </lineage>
</organism>
<dbReference type="EMBL" id="CP000781">
    <property type="protein sequence ID" value="ABS69998.1"/>
    <property type="molecule type" value="Genomic_DNA"/>
</dbReference>
<dbReference type="SMR" id="A7IPQ2"/>
<dbReference type="STRING" id="78245.Xaut_4780"/>
<dbReference type="KEGG" id="xau:Xaut_4780"/>
<dbReference type="eggNOG" id="COG1841">
    <property type="taxonomic scope" value="Bacteria"/>
</dbReference>
<dbReference type="HOGENOM" id="CLU_131047_1_2_5"/>
<dbReference type="OrthoDB" id="9812790at2"/>
<dbReference type="PhylomeDB" id="A7IPQ2"/>
<dbReference type="Proteomes" id="UP000002417">
    <property type="component" value="Chromosome"/>
</dbReference>
<dbReference type="GO" id="GO:0022625">
    <property type="term" value="C:cytosolic large ribosomal subunit"/>
    <property type="evidence" value="ECO:0007669"/>
    <property type="project" value="TreeGrafter"/>
</dbReference>
<dbReference type="GO" id="GO:0003735">
    <property type="term" value="F:structural constituent of ribosome"/>
    <property type="evidence" value="ECO:0007669"/>
    <property type="project" value="InterPro"/>
</dbReference>
<dbReference type="GO" id="GO:0006412">
    <property type="term" value="P:translation"/>
    <property type="evidence" value="ECO:0007669"/>
    <property type="project" value="UniProtKB-UniRule"/>
</dbReference>
<dbReference type="CDD" id="cd01658">
    <property type="entry name" value="Ribosomal_L30"/>
    <property type="match status" value="1"/>
</dbReference>
<dbReference type="Gene3D" id="3.30.1390.20">
    <property type="entry name" value="Ribosomal protein L30, ferredoxin-like fold domain"/>
    <property type="match status" value="1"/>
</dbReference>
<dbReference type="HAMAP" id="MF_01371_B">
    <property type="entry name" value="Ribosomal_uL30_B"/>
    <property type="match status" value="1"/>
</dbReference>
<dbReference type="InterPro" id="IPR036919">
    <property type="entry name" value="Ribo_uL30_ferredoxin-like_sf"/>
</dbReference>
<dbReference type="InterPro" id="IPR005996">
    <property type="entry name" value="Ribosomal_uL30_bac-type"/>
</dbReference>
<dbReference type="InterPro" id="IPR016082">
    <property type="entry name" value="Ribosomal_uL30_ferredoxin-like"/>
</dbReference>
<dbReference type="NCBIfam" id="TIGR01308">
    <property type="entry name" value="rpmD_bact"/>
    <property type="match status" value="1"/>
</dbReference>
<dbReference type="PANTHER" id="PTHR15892:SF2">
    <property type="entry name" value="LARGE RIBOSOMAL SUBUNIT PROTEIN UL30M"/>
    <property type="match status" value="1"/>
</dbReference>
<dbReference type="PANTHER" id="PTHR15892">
    <property type="entry name" value="MITOCHONDRIAL RIBOSOMAL PROTEIN L30"/>
    <property type="match status" value="1"/>
</dbReference>
<dbReference type="Pfam" id="PF00327">
    <property type="entry name" value="Ribosomal_L30"/>
    <property type="match status" value="1"/>
</dbReference>
<dbReference type="PIRSF" id="PIRSF002211">
    <property type="entry name" value="Ribosomal_L30_bac-type"/>
    <property type="match status" value="1"/>
</dbReference>
<dbReference type="SUPFAM" id="SSF55129">
    <property type="entry name" value="Ribosomal protein L30p/L7e"/>
    <property type="match status" value="1"/>
</dbReference>